<proteinExistence type="inferred from homology"/>
<name>RL6_XANOM</name>
<evidence type="ECO:0000255" key="1">
    <source>
        <dbReference type="HAMAP-Rule" id="MF_01365"/>
    </source>
</evidence>
<evidence type="ECO:0000305" key="2"/>
<accession>Q2P000</accession>
<organism>
    <name type="scientific">Xanthomonas oryzae pv. oryzae (strain MAFF 311018)</name>
    <dbReference type="NCBI Taxonomy" id="342109"/>
    <lineage>
        <taxon>Bacteria</taxon>
        <taxon>Pseudomonadati</taxon>
        <taxon>Pseudomonadota</taxon>
        <taxon>Gammaproteobacteria</taxon>
        <taxon>Lysobacterales</taxon>
        <taxon>Lysobacteraceae</taxon>
        <taxon>Xanthomonas</taxon>
    </lineage>
</organism>
<dbReference type="EMBL" id="AP008229">
    <property type="protein sequence ID" value="BAE70127.1"/>
    <property type="molecule type" value="Genomic_DNA"/>
</dbReference>
<dbReference type="RefSeq" id="WP_011260022.1">
    <property type="nucleotide sequence ID" value="NC_007705.1"/>
</dbReference>
<dbReference type="SMR" id="Q2P000"/>
<dbReference type="GeneID" id="77338698"/>
<dbReference type="KEGG" id="xom:XOO3372"/>
<dbReference type="HOGENOM" id="CLU_065464_1_2_6"/>
<dbReference type="GO" id="GO:0022625">
    <property type="term" value="C:cytosolic large ribosomal subunit"/>
    <property type="evidence" value="ECO:0007669"/>
    <property type="project" value="TreeGrafter"/>
</dbReference>
<dbReference type="GO" id="GO:0019843">
    <property type="term" value="F:rRNA binding"/>
    <property type="evidence" value="ECO:0007669"/>
    <property type="project" value="UniProtKB-UniRule"/>
</dbReference>
<dbReference type="GO" id="GO:0003735">
    <property type="term" value="F:structural constituent of ribosome"/>
    <property type="evidence" value="ECO:0007669"/>
    <property type="project" value="InterPro"/>
</dbReference>
<dbReference type="GO" id="GO:0002181">
    <property type="term" value="P:cytoplasmic translation"/>
    <property type="evidence" value="ECO:0007669"/>
    <property type="project" value="TreeGrafter"/>
</dbReference>
<dbReference type="FunFam" id="3.90.930.12:FF:000001">
    <property type="entry name" value="50S ribosomal protein L6"/>
    <property type="match status" value="1"/>
</dbReference>
<dbReference type="Gene3D" id="3.90.930.12">
    <property type="entry name" value="Ribosomal protein L6, alpha-beta domain"/>
    <property type="match status" value="2"/>
</dbReference>
<dbReference type="HAMAP" id="MF_01365_B">
    <property type="entry name" value="Ribosomal_uL6_B"/>
    <property type="match status" value="1"/>
</dbReference>
<dbReference type="InterPro" id="IPR000702">
    <property type="entry name" value="Ribosomal_uL6-like"/>
</dbReference>
<dbReference type="InterPro" id="IPR036789">
    <property type="entry name" value="Ribosomal_uL6-like_a/b-dom_sf"/>
</dbReference>
<dbReference type="InterPro" id="IPR020040">
    <property type="entry name" value="Ribosomal_uL6_a/b-dom"/>
</dbReference>
<dbReference type="InterPro" id="IPR019906">
    <property type="entry name" value="Ribosomal_uL6_bac-type"/>
</dbReference>
<dbReference type="InterPro" id="IPR002358">
    <property type="entry name" value="Ribosomal_uL6_CS"/>
</dbReference>
<dbReference type="NCBIfam" id="TIGR03654">
    <property type="entry name" value="L6_bact"/>
    <property type="match status" value="1"/>
</dbReference>
<dbReference type="PANTHER" id="PTHR11655">
    <property type="entry name" value="60S/50S RIBOSOMAL PROTEIN L6/L9"/>
    <property type="match status" value="1"/>
</dbReference>
<dbReference type="PANTHER" id="PTHR11655:SF14">
    <property type="entry name" value="LARGE RIBOSOMAL SUBUNIT PROTEIN UL6M"/>
    <property type="match status" value="1"/>
</dbReference>
<dbReference type="Pfam" id="PF00347">
    <property type="entry name" value="Ribosomal_L6"/>
    <property type="match status" value="2"/>
</dbReference>
<dbReference type="PIRSF" id="PIRSF002162">
    <property type="entry name" value="Ribosomal_L6"/>
    <property type="match status" value="1"/>
</dbReference>
<dbReference type="PRINTS" id="PR00059">
    <property type="entry name" value="RIBOSOMALL6"/>
</dbReference>
<dbReference type="SUPFAM" id="SSF56053">
    <property type="entry name" value="Ribosomal protein L6"/>
    <property type="match status" value="2"/>
</dbReference>
<dbReference type="PROSITE" id="PS00525">
    <property type="entry name" value="RIBOSOMAL_L6_1"/>
    <property type="match status" value="1"/>
</dbReference>
<comment type="function">
    <text evidence="1">This protein binds to the 23S rRNA, and is important in its secondary structure. It is located near the subunit interface in the base of the L7/L12 stalk, and near the tRNA binding site of the peptidyltransferase center.</text>
</comment>
<comment type="subunit">
    <text evidence="1">Part of the 50S ribosomal subunit.</text>
</comment>
<comment type="similarity">
    <text evidence="1">Belongs to the universal ribosomal protein uL6 family.</text>
</comment>
<feature type="chain" id="PRO_0000260979" description="Large ribosomal subunit protein uL6">
    <location>
        <begin position="1"/>
        <end position="175"/>
    </location>
</feature>
<sequence>MSRVAKKPVSLPKGVELNVQSELVSVKGPKGTLTLPKPTGVEIAIDGDVATLSANDPSQIAITGTVRAILANMVKGVSEGFERKLELVGVGYRAAMQGKDLSLALGFSHPLVFVAPEGITLSTPTQTEILVQGADKQRVGEVAAKIRGFRPPEPYKGKGVKYAGEVIIRKEAKKA</sequence>
<gene>
    <name evidence="1" type="primary">rplF</name>
    <name type="ordered locus">XOO3372</name>
</gene>
<keyword id="KW-0687">Ribonucleoprotein</keyword>
<keyword id="KW-0689">Ribosomal protein</keyword>
<keyword id="KW-0694">RNA-binding</keyword>
<keyword id="KW-0699">rRNA-binding</keyword>
<protein>
    <recommendedName>
        <fullName evidence="1">Large ribosomal subunit protein uL6</fullName>
    </recommendedName>
    <alternativeName>
        <fullName evidence="2">50S ribosomal protein L6</fullName>
    </alternativeName>
</protein>
<reference key="1">
    <citation type="journal article" date="2005" name="Jpn. Agric. Res. Q.">
        <title>Genome sequence of Xanthomonas oryzae pv. oryzae suggests contribution of large numbers of effector genes and insertion sequences to its race diversity.</title>
        <authorList>
            <person name="Ochiai H."/>
            <person name="Inoue Y."/>
            <person name="Takeya M."/>
            <person name="Sasaki A."/>
            <person name="Kaku H."/>
        </authorList>
    </citation>
    <scope>NUCLEOTIDE SEQUENCE [LARGE SCALE GENOMIC DNA]</scope>
    <source>
        <strain>MAFF 311018</strain>
    </source>
</reference>